<organismHost>
    <name type="scientific">Aves</name>
    <dbReference type="NCBI Taxonomy" id="8782"/>
</organismHost>
<accession>O41665</accession>
<reference key="1">
    <citation type="journal article" date="1997" name="Virus Res.">
        <title>Evolution of H5 subtype avian influenza A viruses in North America.</title>
        <authorList>
            <person name="Garcia M."/>
            <person name="Suarez D.L."/>
            <person name="Crawford J.M."/>
            <person name="Latimer J.W."/>
            <person name="Slemons R.D."/>
            <person name="Swayne D.E."/>
            <person name="Purdue M.L."/>
        </authorList>
    </citation>
    <scope>NUCLEOTIDE SEQUENCE [GENOMIC RNA]</scope>
</reference>
<reference key="2">
    <citation type="journal article" date="2006" name="Science">
        <title>Large-scale sequence analysis of avian influenza isolates.</title>
        <authorList>
            <person name="Obenauer J.C."/>
            <person name="Denson J."/>
            <person name="Mehta P.K."/>
            <person name="Su X."/>
            <person name="Mukatira S."/>
            <person name="Finkelstein D.B."/>
            <person name="Xu X."/>
            <person name="Wang J."/>
            <person name="Ma J."/>
            <person name="Fan Y."/>
            <person name="Rakestraw K.M."/>
            <person name="Webster R.G."/>
            <person name="Hoffmann E."/>
            <person name="Krauss S."/>
            <person name="Zheng J."/>
            <person name="Zhang Z."/>
            <person name="Naeve C.W."/>
        </authorList>
    </citation>
    <scope>NUCLEOTIDE SEQUENCE [GENOMIC RNA]</scope>
</reference>
<evidence type="ECO:0000255" key="1">
    <source>
        <dbReference type="HAMAP-Rule" id="MF_04066"/>
    </source>
</evidence>
<evidence type="ECO:0000256" key="2">
    <source>
        <dbReference type="SAM" id="MobiDB-lite"/>
    </source>
</evidence>
<comment type="function">
    <text evidence="1">Inhibits post-transcriptional processing of cellular pre-mRNA, by binding and inhibiting two cellular proteins that are required for the 3'-end processing of cellular pre-mRNAs: the 30 kDa cleavage and polyadenylation specificity factor/CPSF4 and the poly(A)-binding protein 2/PABPN1. In turn, unprocessed 3' end pre-mRNAs accumulate in the host nucleus and are no longer exported to the cytoplasm. Cellular protein synthesis is thereby shut off very early after virus infection. Viral protein synthesis is not affected by the inhibition of the cellular 3' end processing machinery because the poly(A) tails of viral mRNAs are produced by the viral polymerase through a stuttering mechanism. Prevents the establishment of the cellular antiviral state by inhibiting TRIM25-mediated RIGI ubiquitination, which normally triggers the antiviral transduction signal that leads to the activation of type I IFN genes by transcription factors IRF3 and IRF7. Also binds poly(A) and U6 snRNA. Inhibits the integrated stress response (ISR) in the infected cell by blocking dsRNA binding by EIF2AK2/PKR and further phosphorylation of EIF2S1/EIF-2ALPHA. Stress granule formation is thus inhibited, which allows protein synthesis and viral replication.</text>
</comment>
<comment type="subunit">
    <text evidence="1">Homodimer. Interacts with host TRIM25 (via coiled coil); this interaction specifically inhibits TRIM25 multimerization and TRIM25-mediated RIGI CARD ubiquitination. Interacts with human EIF2AK2/PKR, CPSF4, IVNS1ABP and PABPN1.</text>
</comment>
<comment type="subcellular location">
    <subcellularLocation>
        <location evidence="1">Host nucleus</location>
    </subcellularLocation>
    <subcellularLocation>
        <location evidence="1">Host cytoplasm</location>
    </subcellularLocation>
    <text evidence="1">In uninfected, transfected cells, NS1 is localized in the nucleus. Only in virus infected cells, the nuclear export signal is unveiled, presumably by a viral protein, and a fraction of NS1 is exported in the cytoplasm.</text>
</comment>
<comment type="alternative products">
    <event type="alternative splicing"/>
    <isoform>
        <id>O41665-1</id>
        <name>NS1</name>
        <sequence type="displayed"/>
    </isoform>
    <isoform>
        <id>Q76S20-1</id>
        <name>NEP</name>
        <name>NS2</name>
        <sequence type="external"/>
    </isoform>
</comment>
<comment type="domain">
    <text evidence="1">The dsRNA-binding region is required for suppression of RNA silencing.</text>
</comment>
<comment type="PTM">
    <text evidence="1">Upon interferon induction, ISGylated via host HERC5; this results in the impairment of NS1 interaction with RNA targets due to its inability to form homodimers and to interact with host EIF2AK2/PKR.</text>
</comment>
<comment type="similarity">
    <text evidence="1">Belongs to the influenza A viruses NS1 family.</text>
</comment>
<sequence>MDSNTVSSFQVDCFLWHVRKRFADQELGDAPFLDRLRRDQKSLRGRGSTLGLDIETATRAGKQIVERILEEEPDEALEMTIASVPAPRYLTDMTLEEMSRDWFMLMPKQKVAGSLCIRMDQAIMDKNITLKANLSVISDRLETLILLRAFTEEGTIVGEISPLPSLPGHTDEDVKNAIGVLIGGLEWNDNTIRVSETLQRFAWRSSNENGRPPLPPKQKRKMARTIESEV</sequence>
<keyword id="KW-0025">Alternative splicing</keyword>
<keyword id="KW-1262">Eukaryotic host gene expression shutoff by virus</keyword>
<keyword id="KW-1035">Host cytoplasm</keyword>
<keyword id="KW-1190">Host gene expression shutoff by virus</keyword>
<keyword id="KW-1192">Host mRNA suppression by virus</keyword>
<keyword id="KW-1048">Host nucleus</keyword>
<keyword id="KW-0945">Host-virus interaction</keyword>
<keyword id="KW-1090">Inhibition of host innate immune response by virus</keyword>
<keyword id="KW-1114">Inhibition of host interferon signaling pathway by virus</keyword>
<keyword id="KW-1102">Inhibition of host PKR by virus</keyword>
<keyword id="KW-1103">Inhibition of host pre-mRNA processing by virus</keyword>
<keyword id="KW-1088">Inhibition of host RIG-I by virus</keyword>
<keyword id="KW-1113">Inhibition of host RLR pathway by virus</keyword>
<keyword id="KW-0922">Interferon antiviral system evasion</keyword>
<keyword id="KW-0694">RNA-binding</keyword>
<keyword id="KW-0832">Ubl conjugation</keyword>
<keyword id="KW-0899">Viral immunoevasion</keyword>
<organism>
    <name type="scientific">Influenza A virus (strain A/Turkey/Ireland/1378/1983 H5N8)</name>
    <dbReference type="NCBI Taxonomy" id="380285"/>
    <lineage>
        <taxon>Viruses</taxon>
        <taxon>Riboviria</taxon>
        <taxon>Orthornavirae</taxon>
        <taxon>Negarnaviricota</taxon>
        <taxon>Polyploviricotina</taxon>
        <taxon>Insthoviricetes</taxon>
        <taxon>Articulavirales</taxon>
        <taxon>Orthomyxoviridae</taxon>
        <taxon>Alphainfluenzavirus</taxon>
        <taxon>Alphainfluenzavirus influenzae</taxon>
        <taxon>Influenza A virus</taxon>
    </lineage>
</organism>
<name>NS1_I83A4</name>
<gene>
    <name evidence="1" type="primary">NS</name>
</gene>
<proteinExistence type="inferred from homology"/>
<protein>
    <recommendedName>
        <fullName evidence="1">Non-structural protein 1</fullName>
        <shortName evidence="1">NS1</shortName>
    </recommendedName>
    <alternativeName>
        <fullName evidence="1">NS1A</fullName>
    </alternativeName>
</protein>
<dbReference type="EMBL" id="U85392">
    <property type="protein sequence ID" value="AAC40685.1"/>
    <property type="molecule type" value="Genomic_RNA"/>
</dbReference>
<dbReference type="EMBL" id="CY015093">
    <property type="protein sequence ID" value="ABI85122.1"/>
    <property type="molecule type" value="Genomic_RNA"/>
</dbReference>
<dbReference type="SMR" id="O41665"/>
<dbReference type="Proteomes" id="UP000008583">
    <property type="component" value="Genome"/>
</dbReference>
<dbReference type="GO" id="GO:0030430">
    <property type="term" value="C:host cell cytoplasm"/>
    <property type="evidence" value="ECO:0007669"/>
    <property type="project" value="UniProtKB-SubCell"/>
</dbReference>
<dbReference type="GO" id="GO:0042025">
    <property type="term" value="C:host cell nucleus"/>
    <property type="evidence" value="ECO:0007669"/>
    <property type="project" value="UniProtKB-SubCell"/>
</dbReference>
<dbReference type="GO" id="GO:0030291">
    <property type="term" value="F:protein serine/threonine kinase inhibitor activity"/>
    <property type="evidence" value="ECO:0007669"/>
    <property type="project" value="UniProtKB-KW"/>
</dbReference>
<dbReference type="GO" id="GO:0003723">
    <property type="term" value="F:RNA binding"/>
    <property type="evidence" value="ECO:0007669"/>
    <property type="project" value="UniProtKB-KW"/>
</dbReference>
<dbReference type="GO" id="GO:0039540">
    <property type="term" value="P:symbiont-mediated suppression of host cytoplasmic pattern recognition receptor signaling pathway via inhibition of RIG-I activity"/>
    <property type="evidence" value="ECO:0007669"/>
    <property type="project" value="UniProtKB-KW"/>
</dbReference>
<dbReference type="GO" id="GO:0039657">
    <property type="term" value="P:symbiont-mediated suppression of host gene expression"/>
    <property type="evidence" value="ECO:0007669"/>
    <property type="project" value="UniProtKB-KW"/>
</dbReference>
<dbReference type="GO" id="GO:0039524">
    <property type="term" value="P:symbiont-mediated suppression of host mRNA processing"/>
    <property type="evidence" value="ECO:0007669"/>
    <property type="project" value="UniProtKB-KW"/>
</dbReference>
<dbReference type="GO" id="GO:0039580">
    <property type="term" value="P:symbiont-mediated suppression of host PKR/eIFalpha signaling"/>
    <property type="evidence" value="ECO:0007669"/>
    <property type="project" value="UniProtKB-KW"/>
</dbReference>
<dbReference type="GO" id="GO:0039502">
    <property type="term" value="P:symbiont-mediated suppression of host type I interferon-mediated signaling pathway"/>
    <property type="evidence" value="ECO:0007669"/>
    <property type="project" value="UniProtKB-KW"/>
</dbReference>
<dbReference type="FunFam" id="1.10.287.10:FF:000001">
    <property type="entry name" value="Non-structural protein 1"/>
    <property type="match status" value="1"/>
</dbReference>
<dbReference type="FunFam" id="3.30.420.330:FF:000001">
    <property type="entry name" value="Non-structural protein 1"/>
    <property type="match status" value="1"/>
</dbReference>
<dbReference type="Gene3D" id="3.30.420.330">
    <property type="entry name" value="Influenza virus non-structural protein, effector domain"/>
    <property type="match status" value="1"/>
</dbReference>
<dbReference type="Gene3D" id="1.10.287.10">
    <property type="entry name" value="S15/NS1, RNA-binding"/>
    <property type="match status" value="1"/>
</dbReference>
<dbReference type="HAMAP" id="MF_04066">
    <property type="entry name" value="INFV_NS1"/>
    <property type="match status" value="1"/>
</dbReference>
<dbReference type="InterPro" id="IPR004208">
    <property type="entry name" value="NS1"/>
</dbReference>
<dbReference type="InterPro" id="IPR000256">
    <property type="entry name" value="NS1A"/>
</dbReference>
<dbReference type="InterPro" id="IPR038064">
    <property type="entry name" value="NS1A_effect_dom-like_sf"/>
</dbReference>
<dbReference type="InterPro" id="IPR009068">
    <property type="entry name" value="uS15_NS1_RNA-bd_sf"/>
</dbReference>
<dbReference type="Pfam" id="PF00600">
    <property type="entry name" value="Flu_NS1"/>
    <property type="match status" value="1"/>
</dbReference>
<dbReference type="SUPFAM" id="SSF143021">
    <property type="entry name" value="Ns1 effector domain-like"/>
    <property type="match status" value="1"/>
</dbReference>
<dbReference type="SUPFAM" id="SSF47060">
    <property type="entry name" value="S15/NS1 RNA-binding domain"/>
    <property type="match status" value="1"/>
</dbReference>
<feature type="chain" id="PRO_0000324272" description="Non-structural protein 1">
    <location>
        <begin position="1"/>
        <end position="230"/>
    </location>
</feature>
<feature type="region of interest" description="RNA-binding and homodimerization" evidence="1">
    <location>
        <begin position="1"/>
        <end position="73"/>
    </location>
</feature>
<feature type="region of interest" description="CPSF4-binding" evidence="1">
    <location>
        <begin position="180"/>
        <end position="215"/>
    </location>
</feature>
<feature type="region of interest" description="Disordered" evidence="2">
    <location>
        <begin position="205"/>
        <end position="230"/>
    </location>
</feature>
<feature type="region of interest" description="PABPN1-binding" evidence="1">
    <location>
        <begin position="223"/>
        <end position="230"/>
    </location>
</feature>
<feature type="short sequence motif" description="Nuclear localization signal" evidence="1">
    <location>
        <begin position="34"/>
        <end position="38"/>
    </location>
</feature>
<feature type="short sequence motif" description="Nuclear export signal" evidence="1">
    <location>
        <begin position="137"/>
        <end position="146"/>
    </location>
</feature>